<gene>
    <name evidence="1" type="primary">recA</name>
    <name type="ordered locus">VV1_1591</name>
</gene>
<feature type="chain" id="PRO_0000122895" description="Protein RecA">
    <location>
        <begin position="1"/>
        <end position="349"/>
    </location>
</feature>
<feature type="binding site" evidence="1">
    <location>
        <begin position="65"/>
        <end position="72"/>
    </location>
    <ligand>
        <name>ATP</name>
        <dbReference type="ChEBI" id="CHEBI:30616"/>
    </ligand>
</feature>
<name>RECA_VIBVU</name>
<proteinExistence type="inferred from homology"/>
<protein>
    <recommendedName>
        <fullName evidence="1">Protein RecA</fullName>
    </recommendedName>
    <alternativeName>
        <fullName evidence="1">Recombinase A</fullName>
    </alternativeName>
</protein>
<comment type="function">
    <text evidence="1">Can catalyze the hydrolysis of ATP in the presence of single-stranded DNA, the ATP-dependent uptake of single-stranded DNA by duplex DNA, and the ATP-dependent hybridization of homologous single-stranded DNAs. It interacts with LexA causing its activation and leading to its autocatalytic cleavage.</text>
</comment>
<comment type="subcellular location">
    <subcellularLocation>
        <location evidence="1">Cytoplasm</location>
    </subcellularLocation>
</comment>
<comment type="similarity">
    <text evidence="1">Belongs to the RecA family.</text>
</comment>
<reference key="1">
    <citation type="submission" date="2002-12" db="EMBL/GenBank/DDBJ databases">
        <title>Complete genome sequence of Vibrio vulnificus CMCP6.</title>
        <authorList>
            <person name="Rhee J.H."/>
            <person name="Kim S.Y."/>
            <person name="Chung S.S."/>
            <person name="Kim J.J."/>
            <person name="Moon Y.H."/>
            <person name="Jeong H."/>
            <person name="Choy H.E."/>
        </authorList>
    </citation>
    <scope>NUCLEOTIDE SEQUENCE [LARGE SCALE GENOMIC DNA]</scope>
    <source>
        <strain>CMCP6</strain>
    </source>
</reference>
<accession>Q8DC51</accession>
<dbReference type="EMBL" id="AE016795">
    <property type="protein sequence ID" value="AAO10014.1"/>
    <property type="molecule type" value="Genomic_DNA"/>
</dbReference>
<dbReference type="RefSeq" id="WP_011079524.1">
    <property type="nucleotide sequence ID" value="NC_004459.3"/>
</dbReference>
<dbReference type="SMR" id="Q8DC51"/>
<dbReference type="KEGG" id="vvu:VV1_1591"/>
<dbReference type="HOGENOM" id="CLU_040469_3_2_6"/>
<dbReference type="Proteomes" id="UP000002275">
    <property type="component" value="Chromosome 1"/>
</dbReference>
<dbReference type="GO" id="GO:0005829">
    <property type="term" value="C:cytosol"/>
    <property type="evidence" value="ECO:0007669"/>
    <property type="project" value="TreeGrafter"/>
</dbReference>
<dbReference type="GO" id="GO:0005524">
    <property type="term" value="F:ATP binding"/>
    <property type="evidence" value="ECO:0007669"/>
    <property type="project" value="UniProtKB-UniRule"/>
</dbReference>
<dbReference type="GO" id="GO:0016887">
    <property type="term" value="F:ATP hydrolysis activity"/>
    <property type="evidence" value="ECO:0007669"/>
    <property type="project" value="InterPro"/>
</dbReference>
<dbReference type="GO" id="GO:0140664">
    <property type="term" value="F:ATP-dependent DNA damage sensor activity"/>
    <property type="evidence" value="ECO:0007669"/>
    <property type="project" value="InterPro"/>
</dbReference>
<dbReference type="GO" id="GO:0003684">
    <property type="term" value="F:damaged DNA binding"/>
    <property type="evidence" value="ECO:0007669"/>
    <property type="project" value="UniProtKB-UniRule"/>
</dbReference>
<dbReference type="GO" id="GO:0003697">
    <property type="term" value="F:single-stranded DNA binding"/>
    <property type="evidence" value="ECO:0007669"/>
    <property type="project" value="UniProtKB-UniRule"/>
</dbReference>
<dbReference type="GO" id="GO:0006310">
    <property type="term" value="P:DNA recombination"/>
    <property type="evidence" value="ECO:0007669"/>
    <property type="project" value="UniProtKB-UniRule"/>
</dbReference>
<dbReference type="GO" id="GO:0006281">
    <property type="term" value="P:DNA repair"/>
    <property type="evidence" value="ECO:0007669"/>
    <property type="project" value="UniProtKB-UniRule"/>
</dbReference>
<dbReference type="GO" id="GO:0009432">
    <property type="term" value="P:SOS response"/>
    <property type="evidence" value="ECO:0007669"/>
    <property type="project" value="UniProtKB-UniRule"/>
</dbReference>
<dbReference type="CDD" id="cd00983">
    <property type="entry name" value="RecA"/>
    <property type="match status" value="1"/>
</dbReference>
<dbReference type="FunFam" id="3.40.50.300:FF:000087">
    <property type="entry name" value="Recombinase RecA"/>
    <property type="match status" value="1"/>
</dbReference>
<dbReference type="Gene3D" id="3.40.50.300">
    <property type="entry name" value="P-loop containing nucleotide triphosphate hydrolases"/>
    <property type="match status" value="1"/>
</dbReference>
<dbReference type="HAMAP" id="MF_00268">
    <property type="entry name" value="RecA"/>
    <property type="match status" value="1"/>
</dbReference>
<dbReference type="InterPro" id="IPR003593">
    <property type="entry name" value="AAA+_ATPase"/>
</dbReference>
<dbReference type="InterPro" id="IPR013765">
    <property type="entry name" value="DNA_recomb/repair_RecA"/>
</dbReference>
<dbReference type="InterPro" id="IPR020584">
    <property type="entry name" value="DNA_recomb/repair_RecA_CS"/>
</dbReference>
<dbReference type="InterPro" id="IPR027417">
    <property type="entry name" value="P-loop_NTPase"/>
</dbReference>
<dbReference type="InterPro" id="IPR049261">
    <property type="entry name" value="RecA-like_C"/>
</dbReference>
<dbReference type="InterPro" id="IPR049428">
    <property type="entry name" value="RecA-like_N"/>
</dbReference>
<dbReference type="InterPro" id="IPR020588">
    <property type="entry name" value="RecA_ATP-bd"/>
</dbReference>
<dbReference type="InterPro" id="IPR023400">
    <property type="entry name" value="RecA_C_sf"/>
</dbReference>
<dbReference type="InterPro" id="IPR020587">
    <property type="entry name" value="RecA_monomer-monomer_interface"/>
</dbReference>
<dbReference type="NCBIfam" id="TIGR02012">
    <property type="entry name" value="tigrfam_recA"/>
    <property type="match status" value="1"/>
</dbReference>
<dbReference type="PANTHER" id="PTHR45900:SF1">
    <property type="entry name" value="MITOCHONDRIAL DNA REPAIR PROTEIN RECA HOMOLOG-RELATED"/>
    <property type="match status" value="1"/>
</dbReference>
<dbReference type="PANTHER" id="PTHR45900">
    <property type="entry name" value="RECA"/>
    <property type="match status" value="1"/>
</dbReference>
<dbReference type="Pfam" id="PF00154">
    <property type="entry name" value="RecA"/>
    <property type="match status" value="1"/>
</dbReference>
<dbReference type="Pfam" id="PF21096">
    <property type="entry name" value="RecA_C"/>
    <property type="match status" value="1"/>
</dbReference>
<dbReference type="PRINTS" id="PR00142">
    <property type="entry name" value="RECA"/>
</dbReference>
<dbReference type="SMART" id="SM00382">
    <property type="entry name" value="AAA"/>
    <property type="match status" value="1"/>
</dbReference>
<dbReference type="SUPFAM" id="SSF52540">
    <property type="entry name" value="P-loop containing nucleoside triphosphate hydrolases"/>
    <property type="match status" value="1"/>
</dbReference>
<dbReference type="SUPFAM" id="SSF54752">
    <property type="entry name" value="RecA protein, C-terminal domain"/>
    <property type="match status" value="1"/>
</dbReference>
<dbReference type="PROSITE" id="PS00321">
    <property type="entry name" value="RECA_1"/>
    <property type="match status" value="1"/>
</dbReference>
<dbReference type="PROSITE" id="PS50162">
    <property type="entry name" value="RECA_2"/>
    <property type="match status" value="1"/>
</dbReference>
<dbReference type="PROSITE" id="PS50163">
    <property type="entry name" value="RECA_3"/>
    <property type="match status" value="1"/>
</dbReference>
<organism>
    <name type="scientific">Vibrio vulnificus (strain CMCP6)</name>
    <dbReference type="NCBI Taxonomy" id="216895"/>
    <lineage>
        <taxon>Bacteria</taxon>
        <taxon>Pseudomonadati</taxon>
        <taxon>Pseudomonadota</taxon>
        <taxon>Gammaproteobacteria</taxon>
        <taxon>Vibrionales</taxon>
        <taxon>Vibrionaceae</taxon>
        <taxon>Vibrio</taxon>
    </lineage>
</organism>
<keyword id="KW-0067">ATP-binding</keyword>
<keyword id="KW-0963">Cytoplasm</keyword>
<keyword id="KW-0227">DNA damage</keyword>
<keyword id="KW-0233">DNA recombination</keyword>
<keyword id="KW-0234">DNA repair</keyword>
<keyword id="KW-0238">DNA-binding</keyword>
<keyword id="KW-0547">Nucleotide-binding</keyword>
<keyword id="KW-0742">SOS response</keyword>
<evidence type="ECO:0000255" key="1">
    <source>
        <dbReference type="HAMAP-Rule" id="MF_00268"/>
    </source>
</evidence>
<sequence length="349" mass="37738">MDENKQKALAAALGQIEKQFGKGSIMRLGDNRAMDVETISTGSLSLDIALGAGGLPMGRIVEIFGPESSGKTTLTLELIAAAQREGKTCAFIDAEHALDPVYAKKLGVNIDQLLVSQPDTGEQALEICDALARSGAVDVIVVDSVAALTPKAEIEGEMGDSHMGLQARMLSQAMRKLTGNLKQSNCMCIFINQIRMKIGVMFGNPETTTGGNALKFYASVRLDIRRTGAIKEGDEVVGNETRIKVVKNKIAAPFKEANTQIMYGQGFNREGELIDLGVKCKLIEKSGAWYSYNGDKIGQGKANACKYLKENVDVAKVLDTKLREMLLSPANINDESAELVEEMPEQEEF</sequence>